<keyword id="KW-0687">Ribonucleoprotein</keyword>
<keyword id="KW-0689">Ribosomal protein</keyword>
<reference key="1">
    <citation type="journal article" date="2002" name="Proc. Natl. Acad. Sci. U.S.A.">
        <title>Genome sequence of a serotype M3 strain of group A Streptococcus: phage-encoded toxins, the high-virulence phenotype, and clone emergence.</title>
        <authorList>
            <person name="Beres S.B."/>
            <person name="Sylva G.L."/>
            <person name="Barbian K.D."/>
            <person name="Lei B."/>
            <person name="Hoff J.S."/>
            <person name="Mammarella N.D."/>
            <person name="Liu M.-Y."/>
            <person name="Smoot J.C."/>
            <person name="Porcella S.F."/>
            <person name="Parkins L.D."/>
            <person name="Campbell D.S."/>
            <person name="Smith T.M."/>
            <person name="McCormick J.K."/>
            <person name="Leung D.Y.M."/>
            <person name="Schlievert P.M."/>
            <person name="Musser J.M."/>
        </authorList>
    </citation>
    <scope>NUCLEOTIDE SEQUENCE [LARGE SCALE GENOMIC DNA]</scope>
    <source>
        <strain>ATCC BAA-595 / MGAS315</strain>
    </source>
</reference>
<name>RL32_STRP3</name>
<protein>
    <recommendedName>
        <fullName evidence="1">Large ribosomal subunit protein bL32</fullName>
    </recommendedName>
    <alternativeName>
        <fullName evidence="3">50S ribosomal protein L32</fullName>
    </alternativeName>
</protein>
<comment type="similarity">
    <text evidence="1">Belongs to the bacterial ribosomal protein bL32 family.</text>
</comment>
<gene>
    <name evidence="1" type="primary">rpmF</name>
    <name type="ordered locus">SpyM3_1816</name>
</gene>
<proteinExistence type="inferred from homology"/>
<organism>
    <name type="scientific">Streptococcus pyogenes serotype M3 (strain ATCC BAA-595 / MGAS315)</name>
    <dbReference type="NCBI Taxonomy" id="198466"/>
    <lineage>
        <taxon>Bacteria</taxon>
        <taxon>Bacillati</taxon>
        <taxon>Bacillota</taxon>
        <taxon>Bacilli</taxon>
        <taxon>Lactobacillales</taxon>
        <taxon>Streptococcaceae</taxon>
        <taxon>Streptococcus</taxon>
    </lineage>
</organism>
<accession>P0DE40</accession>
<accession>P66212</accession>
<accession>Q8NZ17</accession>
<dbReference type="EMBL" id="AE014074">
    <property type="protein sequence ID" value="AAM80423.1"/>
    <property type="molecule type" value="Genomic_DNA"/>
</dbReference>
<dbReference type="RefSeq" id="WP_000290414.1">
    <property type="nucleotide sequence ID" value="NC_004070.1"/>
</dbReference>
<dbReference type="SMR" id="P0DE40"/>
<dbReference type="GeneID" id="83689722"/>
<dbReference type="KEGG" id="spg:SpyM3_1816"/>
<dbReference type="HOGENOM" id="CLU_129084_2_3_9"/>
<dbReference type="Proteomes" id="UP000000564">
    <property type="component" value="Chromosome"/>
</dbReference>
<dbReference type="GO" id="GO:0015934">
    <property type="term" value="C:large ribosomal subunit"/>
    <property type="evidence" value="ECO:0007669"/>
    <property type="project" value="InterPro"/>
</dbReference>
<dbReference type="GO" id="GO:0003735">
    <property type="term" value="F:structural constituent of ribosome"/>
    <property type="evidence" value="ECO:0007669"/>
    <property type="project" value="InterPro"/>
</dbReference>
<dbReference type="GO" id="GO:0006412">
    <property type="term" value="P:translation"/>
    <property type="evidence" value="ECO:0007669"/>
    <property type="project" value="UniProtKB-UniRule"/>
</dbReference>
<dbReference type="HAMAP" id="MF_00340">
    <property type="entry name" value="Ribosomal_bL32"/>
    <property type="match status" value="1"/>
</dbReference>
<dbReference type="InterPro" id="IPR002677">
    <property type="entry name" value="Ribosomal_bL32"/>
</dbReference>
<dbReference type="InterPro" id="IPR044957">
    <property type="entry name" value="Ribosomal_bL32_bact"/>
</dbReference>
<dbReference type="InterPro" id="IPR011332">
    <property type="entry name" value="Ribosomal_zn-bd"/>
</dbReference>
<dbReference type="NCBIfam" id="TIGR01031">
    <property type="entry name" value="rpmF_bact"/>
    <property type="match status" value="1"/>
</dbReference>
<dbReference type="PANTHER" id="PTHR35534">
    <property type="entry name" value="50S RIBOSOMAL PROTEIN L32"/>
    <property type="match status" value="1"/>
</dbReference>
<dbReference type="PANTHER" id="PTHR35534:SF1">
    <property type="entry name" value="LARGE RIBOSOMAL SUBUNIT PROTEIN BL32"/>
    <property type="match status" value="1"/>
</dbReference>
<dbReference type="Pfam" id="PF01783">
    <property type="entry name" value="Ribosomal_L32p"/>
    <property type="match status" value="1"/>
</dbReference>
<dbReference type="SUPFAM" id="SSF57829">
    <property type="entry name" value="Zn-binding ribosomal proteins"/>
    <property type="match status" value="1"/>
</dbReference>
<feature type="chain" id="PRO_0000172418" description="Large ribosomal subunit protein bL32">
    <location>
        <begin position="1"/>
        <end position="60"/>
    </location>
</feature>
<feature type="region of interest" description="Disordered" evidence="2">
    <location>
        <begin position="1"/>
        <end position="22"/>
    </location>
</feature>
<feature type="compositionally biased region" description="Basic residues" evidence="2">
    <location>
        <begin position="7"/>
        <end position="20"/>
    </location>
</feature>
<sequence length="60" mass="6865">MAVPARHTSKAKKNKRRTHYKLTAPSVQFDETTGDYSRSHRVSLKGYYKGRKIAKANEAK</sequence>
<evidence type="ECO:0000255" key="1">
    <source>
        <dbReference type="HAMAP-Rule" id="MF_00340"/>
    </source>
</evidence>
<evidence type="ECO:0000256" key="2">
    <source>
        <dbReference type="SAM" id="MobiDB-lite"/>
    </source>
</evidence>
<evidence type="ECO:0000305" key="3"/>